<gene>
    <name evidence="1" type="primary">Cyfip</name>
    <name evidence="1" type="synonym">Sra-1</name>
    <name type="ORF">GA18534</name>
</gene>
<protein>
    <recommendedName>
        <fullName evidence="1">Cytoplasmic FMR1-interacting protein</fullName>
    </recommendedName>
    <alternativeName>
        <fullName evidence="1">Specifically Rac1-associated protein 1</fullName>
    </alternativeName>
</protein>
<evidence type="ECO:0000250" key="1">
    <source>
        <dbReference type="UniProtKB" id="Q9VF87"/>
    </source>
</evidence>
<evidence type="ECO:0000255" key="2"/>
<evidence type="ECO:0000256" key="3">
    <source>
        <dbReference type="SAM" id="MobiDB-lite"/>
    </source>
</evidence>
<evidence type="ECO:0000305" key="4"/>
<evidence type="ECO:0000312" key="5">
    <source>
        <dbReference type="EMBL" id="EAL27741.1"/>
    </source>
</evidence>
<name>CYFIP_DROPS</name>
<dbReference type="EMBL" id="CM000070">
    <property type="protein sequence ID" value="EAL27741.1"/>
    <property type="status" value="ALT_SEQ"/>
    <property type="molecule type" value="Genomic_DNA"/>
</dbReference>
<dbReference type="RefSeq" id="XP_001358600.1">
    <property type="nucleotide sequence ID" value="XM_001358563.3"/>
</dbReference>
<dbReference type="SMR" id="Q299G2"/>
<dbReference type="FunCoup" id="Q299G2">
    <property type="interactions" value="1641"/>
</dbReference>
<dbReference type="STRING" id="46245.Q299G2"/>
<dbReference type="EnsemblMetazoa" id="FBtr0285411">
    <property type="protein sequence ID" value="FBpp0283849"/>
    <property type="gene ID" value="FBgn0078536"/>
</dbReference>
<dbReference type="GeneID" id="4801524"/>
<dbReference type="KEGG" id="dpo:4801524"/>
<dbReference type="CTD" id="41861"/>
<dbReference type="eggNOG" id="KOG3534">
    <property type="taxonomic scope" value="Eukaryota"/>
</dbReference>
<dbReference type="HOGENOM" id="CLU_002688_2_1_1"/>
<dbReference type="InParanoid" id="Q299G2"/>
<dbReference type="OMA" id="DQPNRVE"/>
<dbReference type="PhylomeDB" id="Q299G2"/>
<dbReference type="Proteomes" id="UP000001819">
    <property type="component" value="Chromosome 2"/>
</dbReference>
<dbReference type="Bgee" id="FBgn0078536">
    <property type="expression patterns" value="Expressed in female reproductive system and 2 other cell types or tissues"/>
</dbReference>
<dbReference type="GO" id="GO:0031209">
    <property type="term" value="C:SCAR complex"/>
    <property type="evidence" value="ECO:0000250"/>
    <property type="project" value="UniProtKB"/>
</dbReference>
<dbReference type="GO" id="GO:0031267">
    <property type="term" value="F:small GTPase binding"/>
    <property type="evidence" value="ECO:0007669"/>
    <property type="project" value="InterPro"/>
</dbReference>
<dbReference type="GO" id="GO:0007411">
    <property type="term" value="P:axon guidance"/>
    <property type="evidence" value="ECO:0000250"/>
    <property type="project" value="UniProtKB"/>
</dbReference>
<dbReference type="GO" id="GO:0030031">
    <property type="term" value="P:cell projection assembly"/>
    <property type="evidence" value="ECO:0000250"/>
    <property type="project" value="UniProtKB"/>
</dbReference>
<dbReference type="GO" id="GO:0022416">
    <property type="term" value="P:chaeta development"/>
    <property type="evidence" value="ECO:0000250"/>
    <property type="project" value="UniProtKB"/>
</dbReference>
<dbReference type="GO" id="GO:0030866">
    <property type="term" value="P:cortical actin cytoskeleton organization"/>
    <property type="evidence" value="ECO:0000250"/>
    <property type="project" value="UniProtKB"/>
</dbReference>
<dbReference type="GO" id="GO:0030833">
    <property type="term" value="P:regulation of actin filament polymerization"/>
    <property type="evidence" value="ECO:0007669"/>
    <property type="project" value="InterPro"/>
</dbReference>
<dbReference type="GO" id="GO:0008360">
    <property type="term" value="P:regulation of cell shape"/>
    <property type="evidence" value="ECO:0000250"/>
    <property type="project" value="UniProtKB"/>
</dbReference>
<dbReference type="GO" id="GO:0050807">
    <property type="term" value="P:regulation of synapse organization"/>
    <property type="evidence" value="ECO:0000250"/>
    <property type="project" value="UniProtKB"/>
</dbReference>
<dbReference type="InterPro" id="IPR009828">
    <property type="entry name" value="CYRIA/CYRIB_Rac1-bd"/>
</dbReference>
<dbReference type="InterPro" id="IPR008081">
    <property type="entry name" value="Cytoplasmic_FMR1-int"/>
</dbReference>
<dbReference type="PANTHER" id="PTHR12195">
    <property type="entry name" value="CYTOPLASMIC FMR1-INTERACTING PROTEIN-RELATED"/>
    <property type="match status" value="1"/>
</dbReference>
<dbReference type="Pfam" id="PF07159">
    <property type="entry name" value="CYRIA-B_Rac1-bd"/>
    <property type="match status" value="1"/>
</dbReference>
<dbReference type="Pfam" id="PF05994">
    <property type="entry name" value="FragX_IP"/>
    <property type="match status" value="1"/>
</dbReference>
<dbReference type="PIRSF" id="PIRSF008153">
    <property type="entry name" value="FMR1_interacting"/>
    <property type="match status" value="1"/>
</dbReference>
<dbReference type="PRINTS" id="PR01698">
    <property type="entry name" value="CYTOFMRPINTP"/>
</dbReference>
<keyword id="KW-0133">Cell shape</keyword>
<keyword id="KW-0963">Cytoplasm</keyword>
<keyword id="KW-0217">Developmental protein</keyword>
<keyword id="KW-0221">Differentiation</keyword>
<keyword id="KW-0524">Neurogenesis</keyword>
<keyword id="KW-1185">Reference proteome</keyword>
<comment type="function">
    <text evidence="1">Plays a role in guidance and morphology of central and peripheral axons and in synaptic morphology. Also required for formation of cell membrane protrusions and for bristle development (By similarity).</text>
</comment>
<comment type="subunit">
    <text evidence="1">Interacts with Fmr1 and Rac1. Component of the WAVE complex composed of Hem/Kette, Scar/Wave and Cyfip where it binds through its C-terminus directly to Hem (By similarity).</text>
</comment>
<comment type="subcellular location">
    <subcellularLocation>
        <location evidence="1">Cytoplasm</location>
    </subcellularLocation>
    <text evidence="1">Accumulates in central axons and motor neuron terminals.</text>
</comment>
<comment type="similarity">
    <text evidence="2">Belongs to the CYFIP family.</text>
</comment>
<comment type="sequence caution" evidence="4">
    <conflict type="erroneous gene model prediction">
        <sequence resource="EMBL-CDS" id="EAL27741"/>
    </conflict>
</comment>
<sequence>MTEKITLADALSNVEVLDELSLPDEQPCIEAQPCSIIYKANFDTNFEDRNGFVTGIAKYIEEATTHANLNVLLDEGQKHAVMLYTWRCCSRAIPQPKSNEQPNRVEIYEKTVEVLAPEVNKLLNFMYFQRKAIEAFSGEVKRLCHAEKRKDFVSEAYLLTLGKFINMFAVLDELKNMKSSVKNDYSTYRRAAQFLKVMSDSHTLQESQNLSMFLATQNKIRDTVKDTLEKIVGYEDLLSDVVNICVHMFETKMYLTPEEKHMLVKVMGFGLFLMDSDACNINKLDQKKKIRLDRIDRIFKNLEVVPLFGDMQIAPFNYIKRSKHFDSSKWPLSSSNAISPQADLMVHLPQIREDHVKYISELARYTNEVTTTVKENPSDAENRITADLALRGLQLLSEWTSVVTELYSWKLLHPTDHHQNKECPVEAEEYERATRYNYTSEEKFALIEVIAMIKGLQVLMARIETVLCEAIRRNIYSELQDFVQLSLREPLRKAVKNKKDLIRSIIMSVRETSADWQKGYEPTDDPVSKGKKDPDGGFRIHVPRLNVGPSSTQLYMVRTMLESLTADKSGGKRTLRKDIDGNCLMQIETFHNTSFYWSYLLNFSDTLQKCCDLSQLWYREFYLEMTMGRKVNKCMVRHQHNEECKDLITMEKRIQFPIEMSMPWILTDHILQTKEPSMMEFVLYPLDLYNDSAHYALTVFRKQFLYDEVEAEVNLCFDQFVYKLSEQIFAHYKQLAGSIFLDKRFRLECEVLGFNFQSYPRNNRYETLLKQRHVQLLGRSIDLNKLVTQRINANMHKSIELAISRFEANDITGIVELEGLLEANRICHKLLSKYLALDNFDGMVKEANHNVLAPYGRITLHVFVELNYDFLVNYCYNAATNRFIRTKVNLSSTQAIQREKPPQMSHYYLWGSKQLNAAYSTQYGQYTGFVGSPHFHAMCRLLGYQGIAVVMDIILKDIVKPLIQGSLLQFTKTLMIAMPKSCKLPRCEYGSPGVLSYYQAHLTDIVQYPDTKTELFQSFREFGNCIIFCLLIEQALSQEEVCDLLHAALFQNIFPRPFCKENEKPEAKQKRLEAQFANLQIVSNVEKIGTAKQAMIAREGDLLTRERLCCGLSIFEVILNRVKSYLDDPVWCGPPPANGIIHVDECSEFHRLWSALQFVYCIPVRGTEYTIEELFGEGLNWAGCVMIVLLGQQRRFEALDFCYHILRVQRVDGKDEDVKGIQLKRMVDRIRRFQVLNSQIFSILNKYLKGGDGEGSNVEHVRCFPPPQHPSVISSSSHYQDPQKLRQSMNN</sequence>
<accession>Q299G2</accession>
<feature type="chain" id="PRO_0000279715" description="Cytoplasmic FMR1-interacting protein">
    <location>
        <begin position="1"/>
        <end position="1291"/>
    </location>
</feature>
<feature type="region of interest" description="Disordered" evidence="3">
    <location>
        <begin position="1269"/>
        <end position="1291"/>
    </location>
</feature>
<feature type="compositionally biased region" description="Polar residues" evidence="3">
    <location>
        <begin position="1271"/>
        <end position="1291"/>
    </location>
</feature>
<organism>
    <name type="scientific">Drosophila pseudoobscura pseudoobscura</name>
    <name type="common">Fruit fly</name>
    <dbReference type="NCBI Taxonomy" id="46245"/>
    <lineage>
        <taxon>Eukaryota</taxon>
        <taxon>Metazoa</taxon>
        <taxon>Ecdysozoa</taxon>
        <taxon>Arthropoda</taxon>
        <taxon>Hexapoda</taxon>
        <taxon>Insecta</taxon>
        <taxon>Pterygota</taxon>
        <taxon>Neoptera</taxon>
        <taxon>Endopterygota</taxon>
        <taxon>Diptera</taxon>
        <taxon>Brachycera</taxon>
        <taxon>Muscomorpha</taxon>
        <taxon>Ephydroidea</taxon>
        <taxon>Drosophilidae</taxon>
        <taxon>Drosophila</taxon>
        <taxon>Sophophora</taxon>
    </lineage>
</organism>
<reference evidence="5" key="1">
    <citation type="journal article" date="2005" name="Genome Res.">
        <title>Comparative genome sequencing of Drosophila pseudoobscura: chromosomal, gene, and cis-element evolution.</title>
        <authorList>
            <person name="Richards S."/>
            <person name="Liu Y."/>
            <person name="Bettencourt B.R."/>
            <person name="Hradecky P."/>
            <person name="Letovsky S."/>
            <person name="Nielsen R."/>
            <person name="Thornton K."/>
            <person name="Hubisz M.J."/>
            <person name="Chen R."/>
            <person name="Meisel R.P."/>
            <person name="Couronne O."/>
            <person name="Hua S."/>
            <person name="Smith M.A."/>
            <person name="Zhang P."/>
            <person name="Liu J."/>
            <person name="Bussemaker H.J."/>
            <person name="van Batenburg M.F."/>
            <person name="Howells S.L."/>
            <person name="Scherer S.E."/>
            <person name="Sodergren E."/>
            <person name="Matthews B.B."/>
            <person name="Crosby M.A."/>
            <person name="Schroeder A.J."/>
            <person name="Ortiz-Barrientos D."/>
            <person name="Rives C.M."/>
            <person name="Metzker M.L."/>
            <person name="Muzny D.M."/>
            <person name="Scott G."/>
            <person name="Steffen D."/>
            <person name="Wheeler D.A."/>
            <person name="Worley K.C."/>
            <person name="Havlak P."/>
            <person name="Durbin K.J."/>
            <person name="Egan A."/>
            <person name="Gill R."/>
            <person name="Hume J."/>
            <person name="Morgan M.B."/>
            <person name="Miner G."/>
            <person name="Hamilton C."/>
            <person name="Huang Y."/>
            <person name="Waldron L."/>
            <person name="Verduzco D."/>
            <person name="Clerc-Blankenburg K.P."/>
            <person name="Dubchak I."/>
            <person name="Noor M.A.F."/>
            <person name="Anderson W."/>
            <person name="White K.P."/>
            <person name="Clark A.G."/>
            <person name="Schaeffer S.W."/>
            <person name="Gelbart W.M."/>
            <person name="Weinstock G.M."/>
            <person name="Gibbs R.A."/>
        </authorList>
    </citation>
    <scope>NUCLEOTIDE SEQUENCE [LARGE SCALE GENOMIC DNA]</scope>
    <source>
        <strain>MV2-25 / Tucson 14011-0121.94</strain>
    </source>
</reference>
<proteinExistence type="inferred from homology"/>